<organism>
    <name type="scientific">Methanosarcina acetivorans (strain ATCC 35395 / DSM 2834 / JCM 12185 / C2A)</name>
    <dbReference type="NCBI Taxonomy" id="188937"/>
    <lineage>
        <taxon>Archaea</taxon>
        <taxon>Methanobacteriati</taxon>
        <taxon>Methanobacteriota</taxon>
        <taxon>Stenosarchaea group</taxon>
        <taxon>Methanomicrobia</taxon>
        <taxon>Methanosarcinales</taxon>
        <taxon>Methanosarcinaceae</taxon>
        <taxon>Methanosarcina</taxon>
    </lineage>
</organism>
<gene>
    <name evidence="1" type="primary">tmk</name>
    <name type="ordered locus">MA_4433</name>
</gene>
<accession>Q8THS9</accession>
<evidence type="ECO:0000255" key="1">
    <source>
        <dbReference type="HAMAP-Rule" id="MF_00165"/>
    </source>
</evidence>
<protein>
    <recommendedName>
        <fullName evidence="1">Probable thymidylate kinase</fullName>
        <ecNumber evidence="1">2.7.4.9</ecNumber>
    </recommendedName>
    <alternativeName>
        <fullName evidence="1">dTMP kinase</fullName>
    </alternativeName>
</protein>
<reference key="1">
    <citation type="journal article" date="2002" name="Genome Res.">
        <title>The genome of Methanosarcina acetivorans reveals extensive metabolic and physiological diversity.</title>
        <authorList>
            <person name="Galagan J.E."/>
            <person name="Nusbaum C."/>
            <person name="Roy A."/>
            <person name="Endrizzi M.G."/>
            <person name="Macdonald P."/>
            <person name="FitzHugh W."/>
            <person name="Calvo S."/>
            <person name="Engels R."/>
            <person name="Smirnov S."/>
            <person name="Atnoor D."/>
            <person name="Brown A."/>
            <person name="Allen N."/>
            <person name="Naylor J."/>
            <person name="Stange-Thomann N."/>
            <person name="DeArellano K."/>
            <person name="Johnson R."/>
            <person name="Linton L."/>
            <person name="McEwan P."/>
            <person name="McKernan K."/>
            <person name="Talamas J."/>
            <person name="Tirrell A."/>
            <person name="Ye W."/>
            <person name="Zimmer A."/>
            <person name="Barber R.D."/>
            <person name="Cann I."/>
            <person name="Graham D.E."/>
            <person name="Grahame D.A."/>
            <person name="Guss A.M."/>
            <person name="Hedderich R."/>
            <person name="Ingram-Smith C."/>
            <person name="Kuettner H.C."/>
            <person name="Krzycki J.A."/>
            <person name="Leigh J.A."/>
            <person name="Li W."/>
            <person name="Liu J."/>
            <person name="Mukhopadhyay B."/>
            <person name="Reeve J.N."/>
            <person name="Smith K."/>
            <person name="Springer T.A."/>
            <person name="Umayam L.A."/>
            <person name="White O."/>
            <person name="White R.H."/>
            <person name="de Macario E.C."/>
            <person name="Ferry J.G."/>
            <person name="Jarrell K.F."/>
            <person name="Jing H."/>
            <person name="Macario A.J.L."/>
            <person name="Paulsen I.T."/>
            <person name="Pritchett M."/>
            <person name="Sowers K.R."/>
            <person name="Swanson R.V."/>
            <person name="Zinder S.H."/>
            <person name="Lander E."/>
            <person name="Metcalf W.W."/>
            <person name="Birren B."/>
        </authorList>
    </citation>
    <scope>NUCLEOTIDE SEQUENCE [LARGE SCALE GENOMIC DNA]</scope>
    <source>
        <strain>ATCC 35395 / DSM 2834 / JCM 12185 / C2A</strain>
    </source>
</reference>
<comment type="catalytic activity">
    <reaction evidence="1">
        <text>dTMP + ATP = dTDP + ADP</text>
        <dbReference type="Rhea" id="RHEA:13517"/>
        <dbReference type="ChEBI" id="CHEBI:30616"/>
        <dbReference type="ChEBI" id="CHEBI:58369"/>
        <dbReference type="ChEBI" id="CHEBI:63528"/>
        <dbReference type="ChEBI" id="CHEBI:456216"/>
        <dbReference type="EC" id="2.7.4.9"/>
    </reaction>
</comment>
<comment type="similarity">
    <text evidence="1">Belongs to the thymidylate kinase family.</text>
</comment>
<name>KTHY_METAC</name>
<sequence length="206" mass="23304">MRGKLITLEGIDGSGKSTVAKKLQENSELRVFEPVFTREPTRGTLTGNAVENAIQSDTDQLAELFLFTADHAEHLAKLVKPALEDGKTVISDRYSDSRYAYQGITLKNRLDNPLEWVRDLHRGWTVIPDLTFLFDIEPEIAVKRCGKRGEQTKFEKIEFLRGVRELFLGLAAEEPERFVIVDASGSPEDVEKAVVQKILDFVQRIE</sequence>
<dbReference type="EC" id="2.7.4.9" evidence="1"/>
<dbReference type="EMBL" id="AE010299">
    <property type="protein sequence ID" value="AAM07774.1"/>
    <property type="molecule type" value="Genomic_DNA"/>
</dbReference>
<dbReference type="RefSeq" id="WP_011024311.1">
    <property type="nucleotide sequence ID" value="NC_003552.1"/>
</dbReference>
<dbReference type="SMR" id="Q8THS9"/>
<dbReference type="FunCoup" id="Q8THS9">
    <property type="interactions" value="144"/>
</dbReference>
<dbReference type="STRING" id="188937.MA_4433"/>
<dbReference type="EnsemblBacteria" id="AAM07774">
    <property type="protein sequence ID" value="AAM07774"/>
    <property type="gene ID" value="MA_4433"/>
</dbReference>
<dbReference type="GeneID" id="1476327"/>
<dbReference type="KEGG" id="mac:MA_4433"/>
<dbReference type="HOGENOM" id="CLU_049131_0_2_2"/>
<dbReference type="InParanoid" id="Q8THS9"/>
<dbReference type="OrthoDB" id="43083at2157"/>
<dbReference type="PhylomeDB" id="Q8THS9"/>
<dbReference type="Proteomes" id="UP000002487">
    <property type="component" value="Chromosome"/>
</dbReference>
<dbReference type="GO" id="GO:0005737">
    <property type="term" value="C:cytoplasm"/>
    <property type="evidence" value="ECO:0000318"/>
    <property type="project" value="GO_Central"/>
</dbReference>
<dbReference type="GO" id="GO:0005524">
    <property type="term" value="F:ATP binding"/>
    <property type="evidence" value="ECO:0007669"/>
    <property type="project" value="UniProtKB-UniRule"/>
</dbReference>
<dbReference type="GO" id="GO:0004798">
    <property type="term" value="F:dTMP kinase activity"/>
    <property type="evidence" value="ECO:0000318"/>
    <property type="project" value="GO_Central"/>
</dbReference>
<dbReference type="GO" id="GO:0006233">
    <property type="term" value="P:dTDP biosynthetic process"/>
    <property type="evidence" value="ECO:0000318"/>
    <property type="project" value="GO_Central"/>
</dbReference>
<dbReference type="GO" id="GO:0006235">
    <property type="term" value="P:dTTP biosynthetic process"/>
    <property type="evidence" value="ECO:0000318"/>
    <property type="project" value="GO_Central"/>
</dbReference>
<dbReference type="GO" id="GO:0006227">
    <property type="term" value="P:dUDP biosynthetic process"/>
    <property type="evidence" value="ECO:0000318"/>
    <property type="project" value="GO_Central"/>
</dbReference>
<dbReference type="CDD" id="cd01672">
    <property type="entry name" value="TMPK"/>
    <property type="match status" value="1"/>
</dbReference>
<dbReference type="FunFam" id="3.40.50.300:FF:000225">
    <property type="entry name" value="Thymidylate kinase"/>
    <property type="match status" value="1"/>
</dbReference>
<dbReference type="Gene3D" id="3.40.50.300">
    <property type="entry name" value="P-loop containing nucleotide triphosphate hydrolases"/>
    <property type="match status" value="1"/>
</dbReference>
<dbReference type="HAMAP" id="MF_00165">
    <property type="entry name" value="Thymidylate_kinase"/>
    <property type="match status" value="1"/>
</dbReference>
<dbReference type="InterPro" id="IPR027417">
    <property type="entry name" value="P-loop_NTPase"/>
</dbReference>
<dbReference type="InterPro" id="IPR039430">
    <property type="entry name" value="Thymidylate_kin-like_dom"/>
</dbReference>
<dbReference type="InterPro" id="IPR018094">
    <property type="entry name" value="Thymidylate_kinase"/>
</dbReference>
<dbReference type="NCBIfam" id="TIGR00041">
    <property type="entry name" value="DTMP_kinase"/>
    <property type="match status" value="1"/>
</dbReference>
<dbReference type="PANTHER" id="PTHR10344">
    <property type="entry name" value="THYMIDYLATE KINASE"/>
    <property type="match status" value="1"/>
</dbReference>
<dbReference type="PANTHER" id="PTHR10344:SF4">
    <property type="entry name" value="UMP-CMP KINASE 2, MITOCHONDRIAL"/>
    <property type="match status" value="1"/>
</dbReference>
<dbReference type="Pfam" id="PF02223">
    <property type="entry name" value="Thymidylate_kin"/>
    <property type="match status" value="1"/>
</dbReference>
<dbReference type="SUPFAM" id="SSF52540">
    <property type="entry name" value="P-loop containing nucleoside triphosphate hydrolases"/>
    <property type="match status" value="1"/>
</dbReference>
<keyword id="KW-0067">ATP-binding</keyword>
<keyword id="KW-0418">Kinase</keyword>
<keyword id="KW-0545">Nucleotide biosynthesis</keyword>
<keyword id="KW-0547">Nucleotide-binding</keyword>
<keyword id="KW-1185">Reference proteome</keyword>
<keyword id="KW-0808">Transferase</keyword>
<proteinExistence type="inferred from homology"/>
<feature type="chain" id="PRO_0000155385" description="Probable thymidylate kinase">
    <location>
        <begin position="1"/>
        <end position="206"/>
    </location>
</feature>
<feature type="binding site" evidence="1">
    <location>
        <begin position="10"/>
        <end position="17"/>
    </location>
    <ligand>
        <name>ATP</name>
        <dbReference type="ChEBI" id="CHEBI:30616"/>
    </ligand>
</feature>